<sequence>MSPSSKKFKKQSSSKSVKPPLEDNDPSLPSFTSLPDEIVLDCLQRVPRSYYLNLCRVSKTLRSLVRSPELSRLRTLLPKNSVYVSFSQNIINVPPDTIYRWFTLKKKTMKTAMKTFRYKLVKIPIPFPSHHSMYNSSAVGSEIYFVGGSFEPMSELWILDTRTGMFRQGPSMKVARTDEASVGVINGKIYVIGGCEDKIQVEVYDPKSRSWKTTKDPEEKTQRGLMTRLSAVSLDWKVYTVEVGRIGVYDPREAGVDGF</sequence>
<dbReference type="EMBL" id="AC007232">
    <property type="protein sequence ID" value="AAD25819.1"/>
    <property type="status" value="ALT_SEQ"/>
    <property type="molecule type" value="Genomic_DNA"/>
</dbReference>
<dbReference type="EMBL" id="CP002685">
    <property type="protein sequence ID" value="AEC07255.1"/>
    <property type="molecule type" value="Genomic_DNA"/>
</dbReference>
<dbReference type="EMBL" id="DQ446546">
    <property type="protein sequence ID" value="ABE65846.1"/>
    <property type="molecule type" value="mRNA"/>
</dbReference>
<dbReference type="PIR" id="D84608">
    <property type="entry name" value="D84608"/>
</dbReference>
<dbReference type="RefSeq" id="NP_179796.2">
    <molecule id="Q1PF20-1"/>
    <property type="nucleotide sequence ID" value="NM_127774.3"/>
</dbReference>
<dbReference type="SMR" id="Q1PF20"/>
<dbReference type="iPTMnet" id="Q1PF20"/>
<dbReference type="PaxDb" id="3702-AT2G22050.1"/>
<dbReference type="EnsemblPlants" id="AT2G22050.1">
    <molecule id="Q1PF20-1"/>
    <property type="protein sequence ID" value="AT2G22050.1"/>
    <property type="gene ID" value="AT2G22050"/>
</dbReference>
<dbReference type="GeneID" id="816740"/>
<dbReference type="Gramene" id="AT2G22050.1">
    <molecule id="Q1PF20-1"/>
    <property type="protein sequence ID" value="AT2G22050.1"/>
    <property type="gene ID" value="AT2G22050"/>
</dbReference>
<dbReference type="KEGG" id="ath:AT2G22050"/>
<dbReference type="Araport" id="AT2G22050"/>
<dbReference type="TAIR" id="AT2G22050"/>
<dbReference type="eggNOG" id="KOG1072">
    <property type="taxonomic scope" value="Eukaryota"/>
</dbReference>
<dbReference type="HOGENOM" id="CLU_1079047_0_0_1"/>
<dbReference type="InParanoid" id="Q1PF20"/>
<dbReference type="PhylomeDB" id="Q1PF20"/>
<dbReference type="PRO" id="PR:Q1PF20"/>
<dbReference type="Proteomes" id="UP000006548">
    <property type="component" value="Chromosome 2"/>
</dbReference>
<dbReference type="ExpressionAtlas" id="Q1PF20">
    <property type="expression patterns" value="baseline and differential"/>
</dbReference>
<dbReference type="CDD" id="cd22152">
    <property type="entry name" value="F-box_AtAFR-like"/>
    <property type="match status" value="1"/>
</dbReference>
<dbReference type="Gene3D" id="2.120.10.80">
    <property type="entry name" value="Kelch-type beta propeller"/>
    <property type="match status" value="1"/>
</dbReference>
<dbReference type="InterPro" id="IPR036047">
    <property type="entry name" value="F-box-like_dom_sf"/>
</dbReference>
<dbReference type="InterPro" id="IPR050354">
    <property type="entry name" value="F-box/kelch-repeat_ARATH"/>
</dbReference>
<dbReference type="InterPro" id="IPR001810">
    <property type="entry name" value="F-box_dom"/>
</dbReference>
<dbReference type="InterPro" id="IPR015915">
    <property type="entry name" value="Kelch-typ_b-propeller"/>
</dbReference>
<dbReference type="InterPro" id="IPR006652">
    <property type="entry name" value="Kelch_1"/>
</dbReference>
<dbReference type="PANTHER" id="PTHR24414:SF143">
    <property type="entry name" value="F-BOX DOMAIN-CONTAINING PROTEIN"/>
    <property type="match status" value="1"/>
</dbReference>
<dbReference type="PANTHER" id="PTHR24414">
    <property type="entry name" value="F-BOX/KELCH-REPEAT PROTEIN SKIP4"/>
    <property type="match status" value="1"/>
</dbReference>
<dbReference type="Pfam" id="PF00646">
    <property type="entry name" value="F-box"/>
    <property type="match status" value="1"/>
</dbReference>
<dbReference type="Pfam" id="PF25210">
    <property type="entry name" value="Kelch_FKB95"/>
    <property type="match status" value="1"/>
</dbReference>
<dbReference type="SMART" id="SM00256">
    <property type="entry name" value="FBOX"/>
    <property type="match status" value="1"/>
</dbReference>
<dbReference type="SMART" id="SM00612">
    <property type="entry name" value="Kelch"/>
    <property type="match status" value="2"/>
</dbReference>
<dbReference type="SUPFAM" id="SSF81383">
    <property type="entry name" value="F-box domain"/>
    <property type="match status" value="1"/>
</dbReference>
<dbReference type="SUPFAM" id="SSF117281">
    <property type="entry name" value="Kelch motif"/>
    <property type="match status" value="1"/>
</dbReference>
<dbReference type="PROSITE" id="PS50181">
    <property type="entry name" value="FBOX"/>
    <property type="match status" value="1"/>
</dbReference>
<accession>Q1PF20</accession>
<accession>Q9SI00</accession>
<organism>
    <name type="scientific">Arabidopsis thaliana</name>
    <name type="common">Mouse-ear cress</name>
    <dbReference type="NCBI Taxonomy" id="3702"/>
    <lineage>
        <taxon>Eukaryota</taxon>
        <taxon>Viridiplantae</taxon>
        <taxon>Streptophyta</taxon>
        <taxon>Embryophyta</taxon>
        <taxon>Tracheophyta</taxon>
        <taxon>Spermatophyta</taxon>
        <taxon>Magnoliopsida</taxon>
        <taxon>eudicotyledons</taxon>
        <taxon>Gunneridae</taxon>
        <taxon>Pentapetalae</taxon>
        <taxon>rosids</taxon>
        <taxon>malvids</taxon>
        <taxon>Brassicales</taxon>
        <taxon>Brassicaceae</taxon>
        <taxon>Camelineae</taxon>
        <taxon>Arabidopsis</taxon>
    </lineage>
</organism>
<proteinExistence type="evidence at transcript level"/>
<evidence type="ECO:0000255" key="1">
    <source>
        <dbReference type="PROSITE-ProRule" id="PRU00080"/>
    </source>
</evidence>
<evidence type="ECO:0000256" key="2">
    <source>
        <dbReference type="SAM" id="MobiDB-lite"/>
    </source>
</evidence>
<evidence type="ECO:0000305" key="3"/>
<name>FBK34_ARATH</name>
<comment type="alternative products">
    <event type="alternative splicing"/>
    <isoform>
        <id>Q1PF20-1</id>
        <name>1</name>
        <sequence type="displayed"/>
    </isoform>
    <text>A number of isoforms are produced. According to EST sequences.</text>
</comment>
<comment type="sequence caution" evidence="3">
    <conflict type="erroneous gene model prediction">
        <sequence resource="EMBL-CDS" id="AAD25819"/>
    </conflict>
</comment>
<gene>
    <name type="ordered locus">At2g22050</name>
    <name type="ORF">T16B14.10</name>
</gene>
<protein>
    <recommendedName>
        <fullName>F-box/kelch-repeat protein At2g22050</fullName>
    </recommendedName>
</protein>
<reference key="1">
    <citation type="journal article" date="1999" name="Nature">
        <title>Sequence and analysis of chromosome 2 of the plant Arabidopsis thaliana.</title>
        <authorList>
            <person name="Lin X."/>
            <person name="Kaul S."/>
            <person name="Rounsley S.D."/>
            <person name="Shea T.P."/>
            <person name="Benito M.-I."/>
            <person name="Town C.D."/>
            <person name="Fujii C.Y."/>
            <person name="Mason T.M."/>
            <person name="Bowman C.L."/>
            <person name="Barnstead M.E."/>
            <person name="Feldblyum T.V."/>
            <person name="Buell C.R."/>
            <person name="Ketchum K.A."/>
            <person name="Lee J.J."/>
            <person name="Ronning C.M."/>
            <person name="Koo H.L."/>
            <person name="Moffat K.S."/>
            <person name="Cronin L.A."/>
            <person name="Shen M."/>
            <person name="Pai G."/>
            <person name="Van Aken S."/>
            <person name="Umayam L."/>
            <person name="Tallon L.J."/>
            <person name="Gill J.E."/>
            <person name="Adams M.D."/>
            <person name="Carrera A.J."/>
            <person name="Creasy T.H."/>
            <person name="Goodman H.M."/>
            <person name="Somerville C.R."/>
            <person name="Copenhaver G.P."/>
            <person name="Preuss D."/>
            <person name="Nierman W.C."/>
            <person name="White O."/>
            <person name="Eisen J.A."/>
            <person name="Salzberg S.L."/>
            <person name="Fraser C.M."/>
            <person name="Venter J.C."/>
        </authorList>
    </citation>
    <scope>NUCLEOTIDE SEQUENCE [LARGE SCALE GENOMIC DNA]</scope>
    <source>
        <strain>cv. Columbia</strain>
    </source>
</reference>
<reference key="2">
    <citation type="journal article" date="2017" name="Plant J.">
        <title>Araport11: a complete reannotation of the Arabidopsis thaliana reference genome.</title>
        <authorList>
            <person name="Cheng C.Y."/>
            <person name="Krishnakumar V."/>
            <person name="Chan A.P."/>
            <person name="Thibaud-Nissen F."/>
            <person name="Schobel S."/>
            <person name="Town C.D."/>
        </authorList>
    </citation>
    <scope>GENOME REANNOTATION</scope>
    <source>
        <strain>cv. Columbia</strain>
    </source>
</reference>
<reference key="3">
    <citation type="journal article" date="2006" name="Plant Biotechnol. J.">
        <title>Simultaneous high-throughput recombinational cloning of open reading frames in closed and open configurations.</title>
        <authorList>
            <person name="Underwood B.A."/>
            <person name="Vanderhaeghen R."/>
            <person name="Whitford R."/>
            <person name="Town C.D."/>
            <person name="Hilson P."/>
        </authorList>
    </citation>
    <scope>NUCLEOTIDE SEQUENCE [LARGE SCALE MRNA]</scope>
    <source>
        <strain>cv. Columbia</strain>
    </source>
</reference>
<keyword id="KW-0025">Alternative splicing</keyword>
<keyword id="KW-0880">Kelch repeat</keyword>
<keyword id="KW-1185">Reference proteome</keyword>
<feature type="chain" id="PRO_0000283194" description="F-box/kelch-repeat protein At2g22050">
    <location>
        <begin position="1"/>
        <end position="259"/>
    </location>
</feature>
<feature type="domain" description="F-box" evidence="1">
    <location>
        <begin position="28"/>
        <end position="76"/>
    </location>
</feature>
<feature type="repeat" description="Kelch">
    <location>
        <begin position="142"/>
        <end position="186"/>
    </location>
</feature>
<feature type="region of interest" description="Disordered" evidence="2">
    <location>
        <begin position="1"/>
        <end position="29"/>
    </location>
</feature>
<feature type="compositionally biased region" description="Basic residues" evidence="2">
    <location>
        <begin position="1"/>
        <end position="12"/>
    </location>
</feature>